<feature type="chain" id="PRO_0000439278" description="Aminopeptidase RNPEPL1">
    <location>
        <begin position="1"/>
        <end position="720"/>
    </location>
</feature>
<feature type="region of interest" description="Disordered" evidence="4">
    <location>
        <begin position="671"/>
        <end position="708"/>
    </location>
</feature>
<feature type="active site" description="Proton acceptor" evidence="1 3">
    <location>
        <position position="349"/>
    </location>
</feature>
<feature type="binding site" evidence="1">
    <location>
        <begin position="321"/>
        <end position="325"/>
    </location>
    <ligand>
        <name>substrate</name>
    </ligand>
</feature>
<feature type="binding site" evidence="1">
    <location>
        <position position="348"/>
    </location>
    <ligand>
        <name>Zn(2+)</name>
        <dbReference type="ChEBI" id="CHEBI:29105"/>
        <note>catalytic</note>
    </ligand>
</feature>
<feature type="binding site" evidence="1">
    <location>
        <position position="352"/>
    </location>
    <ligand>
        <name>Zn(2+)</name>
        <dbReference type="ChEBI" id="CHEBI:29105"/>
        <note>catalytic</note>
    </ligand>
</feature>
<feature type="binding site" evidence="1">
    <location>
        <position position="371"/>
    </location>
    <ligand>
        <name>Zn(2+)</name>
        <dbReference type="ChEBI" id="CHEBI:29105"/>
        <note>catalytic</note>
    </ligand>
</feature>
<feature type="site" description="Transition state stabilizer" evidence="1">
    <location>
        <position position="437"/>
    </location>
</feature>
<comment type="function">
    <text evidence="2">Broad specificity aminopeptidase which preferentially hydrolyzes an N-terminal methionine, citrulline or glutamine.</text>
</comment>
<comment type="catalytic activity">
    <reaction evidence="2">
        <text>Release of N-terminal amino acids, preferentially methionine, from peptides and arylamides.</text>
        <dbReference type="EC" id="3.4.11.18"/>
    </reaction>
</comment>
<comment type="cofactor">
    <cofactor evidence="1">
        <name>Zn(2+)</name>
        <dbReference type="ChEBI" id="CHEBI:29105"/>
    </cofactor>
    <text evidence="1">Binds 1 zinc ion per subunit.</text>
</comment>
<comment type="similarity">
    <text evidence="5">Belongs to the peptidase M1 family.</text>
</comment>
<evidence type="ECO:0000250" key="1">
    <source>
        <dbReference type="UniProtKB" id="P15144"/>
    </source>
</evidence>
<evidence type="ECO:0000250" key="2">
    <source>
        <dbReference type="UniProtKB" id="Q9HAU8"/>
    </source>
</evidence>
<evidence type="ECO:0000255" key="3">
    <source>
        <dbReference type="PROSITE-ProRule" id="PRU10095"/>
    </source>
</evidence>
<evidence type="ECO:0000256" key="4">
    <source>
        <dbReference type="SAM" id="MobiDB-lite"/>
    </source>
</evidence>
<evidence type="ECO:0000305" key="5"/>
<evidence type="ECO:0000312" key="6">
    <source>
        <dbReference type="MGI" id="MGI:1914170"/>
    </source>
</evidence>
<proteinExistence type="inferred from homology"/>
<protein>
    <recommendedName>
        <fullName evidence="5">Aminopeptidase RNPEPL1</fullName>
        <ecNumber evidence="2">3.4.11.-</ecNumber>
    </recommendedName>
    <alternativeName>
        <fullName evidence="5">Methionyl aminopeptidase</fullName>
        <ecNumber evidence="2">3.4.11.18</ecNumber>
    </alternativeName>
</protein>
<dbReference type="EC" id="3.4.11.-" evidence="2"/>
<dbReference type="EC" id="3.4.11.18" evidence="2"/>
<dbReference type="EMBL" id="AC119846">
    <property type="status" value="NOT_ANNOTATED_CDS"/>
    <property type="molecule type" value="Genomic_DNA"/>
</dbReference>
<dbReference type="CCDS" id="CCDS15180.2"/>
<dbReference type="RefSeq" id="NP_852070.3">
    <property type="nucleotide sequence ID" value="NM_181405.4"/>
</dbReference>
<dbReference type="SMR" id="G5E872"/>
<dbReference type="FunCoup" id="G5E872">
    <property type="interactions" value="9"/>
</dbReference>
<dbReference type="STRING" id="10090.ENSMUSP00000027487"/>
<dbReference type="MEROPS" id="M01.022"/>
<dbReference type="iPTMnet" id="G5E872"/>
<dbReference type="PhosphoSitePlus" id="G5E872"/>
<dbReference type="PaxDb" id="10090-ENSMUSP00000027487"/>
<dbReference type="ProteomicsDB" id="300460"/>
<dbReference type="Antibodypedia" id="34524">
    <property type="antibodies" value="88 antibodies from 15 providers"/>
</dbReference>
<dbReference type="DNASU" id="108657"/>
<dbReference type="Ensembl" id="ENSMUST00000027487.15">
    <property type="protein sequence ID" value="ENSMUSP00000027487.9"/>
    <property type="gene ID" value="ENSMUSG00000026269.15"/>
</dbReference>
<dbReference type="GeneID" id="108657"/>
<dbReference type="KEGG" id="mmu:108657"/>
<dbReference type="UCSC" id="uc007cbw.2">
    <property type="organism name" value="mouse"/>
</dbReference>
<dbReference type="AGR" id="MGI:1914170"/>
<dbReference type="CTD" id="57140"/>
<dbReference type="MGI" id="MGI:1914170">
    <property type="gene designation" value="Rnpepl1"/>
</dbReference>
<dbReference type="VEuPathDB" id="HostDB:ENSMUSG00000026269"/>
<dbReference type="eggNOG" id="KOG1047">
    <property type="taxonomic scope" value="Eukaryota"/>
</dbReference>
<dbReference type="GeneTree" id="ENSGT00940000160400"/>
<dbReference type="HOGENOM" id="CLU_014505_2_1_1"/>
<dbReference type="InParanoid" id="G5E872"/>
<dbReference type="OMA" id="CYSAQLE"/>
<dbReference type="OrthoDB" id="79562at2759"/>
<dbReference type="PhylomeDB" id="G5E872"/>
<dbReference type="TreeFam" id="TF300758"/>
<dbReference type="BioGRID-ORCS" id="108657">
    <property type="hits" value="3 hits in 77 CRISPR screens"/>
</dbReference>
<dbReference type="ChiTaRS" id="Rnpepl1">
    <property type="organism name" value="mouse"/>
</dbReference>
<dbReference type="PRO" id="PR:G5E872"/>
<dbReference type="Proteomes" id="UP000000589">
    <property type="component" value="Chromosome 1"/>
</dbReference>
<dbReference type="RNAct" id="G5E872">
    <property type="molecule type" value="protein"/>
</dbReference>
<dbReference type="Bgee" id="ENSMUSG00000026269">
    <property type="expression patterns" value="Expressed in saccule of membranous labyrinth and 267 other cell types or tissues"/>
</dbReference>
<dbReference type="ExpressionAtlas" id="G5E872">
    <property type="expression patterns" value="baseline and differential"/>
</dbReference>
<dbReference type="GO" id="GO:0004239">
    <property type="term" value="F:initiator methionyl aminopeptidase activity"/>
    <property type="evidence" value="ECO:0007669"/>
    <property type="project" value="UniProtKB-EC"/>
</dbReference>
<dbReference type="GO" id="GO:0070006">
    <property type="term" value="F:metalloaminopeptidase activity"/>
    <property type="evidence" value="ECO:0000250"/>
    <property type="project" value="UniProtKB"/>
</dbReference>
<dbReference type="GO" id="GO:0008270">
    <property type="term" value="F:zinc ion binding"/>
    <property type="evidence" value="ECO:0007669"/>
    <property type="project" value="InterPro"/>
</dbReference>
<dbReference type="GO" id="GO:0006508">
    <property type="term" value="P:proteolysis"/>
    <property type="evidence" value="ECO:0000250"/>
    <property type="project" value="UniProtKB"/>
</dbReference>
<dbReference type="CDD" id="cd09599">
    <property type="entry name" value="M1_LTA4H"/>
    <property type="match status" value="1"/>
</dbReference>
<dbReference type="FunFam" id="1.10.390.10:FF:000003">
    <property type="entry name" value="Leukotriene A(4) hydrolase"/>
    <property type="match status" value="1"/>
</dbReference>
<dbReference type="FunFam" id="1.25.40.320:FF:000001">
    <property type="entry name" value="Leukotriene A(4) hydrolase"/>
    <property type="match status" value="1"/>
</dbReference>
<dbReference type="FunFam" id="3.30.2010.30:FF:000001">
    <property type="entry name" value="Leukotriene A(4) hydrolase"/>
    <property type="match status" value="1"/>
</dbReference>
<dbReference type="Gene3D" id="3.30.2010.30">
    <property type="match status" value="1"/>
</dbReference>
<dbReference type="Gene3D" id="1.10.390.10">
    <property type="entry name" value="Neutral Protease Domain 2"/>
    <property type="match status" value="1"/>
</dbReference>
<dbReference type="Gene3D" id="1.25.40.320">
    <property type="entry name" value="Peptidase M1, leukotriene A4 hydrolase/aminopeptidase C-terminal domain"/>
    <property type="match status" value="1"/>
</dbReference>
<dbReference type="Gene3D" id="2.60.40.1730">
    <property type="entry name" value="tricorn interacting facor f3 domain"/>
    <property type="match status" value="1"/>
</dbReference>
<dbReference type="InterPro" id="IPR045357">
    <property type="entry name" value="Aminopeptidase_N-like_N"/>
</dbReference>
<dbReference type="InterPro" id="IPR042097">
    <property type="entry name" value="Aminopeptidase_N-like_N_sf"/>
</dbReference>
<dbReference type="InterPro" id="IPR016024">
    <property type="entry name" value="ARM-type_fold"/>
</dbReference>
<dbReference type="InterPro" id="IPR049980">
    <property type="entry name" value="LTA4H_cat"/>
</dbReference>
<dbReference type="InterPro" id="IPR038502">
    <property type="entry name" value="M1_LTA-4_hydro/amino_C_sf"/>
</dbReference>
<dbReference type="InterPro" id="IPR034015">
    <property type="entry name" value="M1_LTA4H"/>
</dbReference>
<dbReference type="InterPro" id="IPR001930">
    <property type="entry name" value="Peptidase_M1"/>
</dbReference>
<dbReference type="InterPro" id="IPR015211">
    <property type="entry name" value="Peptidase_M1_C"/>
</dbReference>
<dbReference type="InterPro" id="IPR014782">
    <property type="entry name" value="Peptidase_M1_dom"/>
</dbReference>
<dbReference type="InterPro" id="IPR027268">
    <property type="entry name" value="Peptidase_M4/M1_CTD_sf"/>
</dbReference>
<dbReference type="PANTHER" id="PTHR45726:SF2">
    <property type="entry name" value="AMINOPEPTIDASE RNPEPL1"/>
    <property type="match status" value="1"/>
</dbReference>
<dbReference type="PANTHER" id="PTHR45726">
    <property type="entry name" value="LEUKOTRIENE A-4 HYDROLASE"/>
    <property type="match status" value="1"/>
</dbReference>
<dbReference type="Pfam" id="PF09127">
    <property type="entry name" value="Leuk-A4-hydro_C"/>
    <property type="match status" value="1"/>
</dbReference>
<dbReference type="Pfam" id="PF01433">
    <property type="entry name" value="Peptidase_M1"/>
    <property type="match status" value="1"/>
</dbReference>
<dbReference type="Pfam" id="PF17900">
    <property type="entry name" value="Peptidase_M1_N"/>
    <property type="match status" value="1"/>
</dbReference>
<dbReference type="PRINTS" id="PR00756">
    <property type="entry name" value="ALADIPTASE"/>
</dbReference>
<dbReference type="SMART" id="SM01263">
    <property type="entry name" value="Leuk-A4-hydro_C"/>
    <property type="match status" value="1"/>
</dbReference>
<dbReference type="SUPFAM" id="SSF48371">
    <property type="entry name" value="ARM repeat"/>
    <property type="match status" value="1"/>
</dbReference>
<dbReference type="SUPFAM" id="SSF63737">
    <property type="entry name" value="Leukotriene A4 hydrolase N-terminal domain"/>
    <property type="match status" value="1"/>
</dbReference>
<dbReference type="SUPFAM" id="SSF55486">
    <property type="entry name" value="Metalloproteases ('zincins'), catalytic domain"/>
    <property type="match status" value="1"/>
</dbReference>
<sequence>MAAQCCCRKAPGAEAAPARPPPEPPPALDVASASSAQLFRLRHLQLGLELRPEARELAGCLVLELCALRPAPRALVLDAHPALRLHSVSFRRASAVSESPCTFAFPAPGSGPPLPGFADAPGAESASCPLAFRLDPFTDYGSSLTVTLPPEVQAHQPFQVILRYTSTDAPAIWWLDPELTYGNAKPFVFTQGHSVCNRSFFPCFDTPAVKCTYSAVVKAPLGVQVLMSATQSVYVEEEGLYHFHMEHPVPAYLVALVAGDLKPADIGPRSRVWAEPCLLPTATSKLSGAVEQWLSAAERLYGPYMWGRYDIVFLPPSFPIVAMENPCLTFIISSILESDEFLVIDVIHEVAHSWFGNAVTNATWEEMWLSEGLATYAQRRITTETYGAAFTCLETAFRLDALHRQMRLLGEDSPVSKLQVKLEPGVNPSHLMNLFTYEKGYCFVYYLSQLCGGPQRFDDFLRAYVEKYKFTSVVAQDLLDSFLSFFPELKEQSVDCRAGLEFERWLNATGPPLAEPDLSQGSSLTRPVEALFQLWTAEPLEQAAASASAIDISKWRTFQTALFLDRLLDGSPLPQEVVMSLSKCYSSLLDSMNAEIRIRWLQIVVRNDYYPDLHRVRRFLESQMSRMYTIPLYEDLCTGALKSFALEVFYQTQGRLHPNLRRTIQQILSQGLGPSAEPSTEPSTDLGGAEADTNPDSPALLLGDEAPSSTISLRDVNVSA</sequence>
<reference key="1">
    <citation type="journal article" date="2009" name="PLoS Biol.">
        <title>Lineage-specific biology revealed by a finished genome assembly of the mouse.</title>
        <authorList>
            <person name="Church D.M."/>
            <person name="Goodstadt L."/>
            <person name="Hillier L.W."/>
            <person name="Zody M.C."/>
            <person name="Goldstein S."/>
            <person name="She X."/>
            <person name="Bult C.J."/>
            <person name="Agarwala R."/>
            <person name="Cherry J.L."/>
            <person name="DiCuccio M."/>
            <person name="Hlavina W."/>
            <person name="Kapustin Y."/>
            <person name="Meric P."/>
            <person name="Maglott D."/>
            <person name="Birtle Z."/>
            <person name="Marques A.C."/>
            <person name="Graves T."/>
            <person name="Zhou S."/>
            <person name="Teague B."/>
            <person name="Potamousis K."/>
            <person name="Churas C."/>
            <person name="Place M."/>
            <person name="Herschleb J."/>
            <person name="Runnheim R."/>
            <person name="Forrest D."/>
            <person name="Amos-Landgraf J."/>
            <person name="Schwartz D.C."/>
            <person name="Cheng Z."/>
            <person name="Lindblad-Toh K."/>
            <person name="Eichler E.E."/>
            <person name="Ponting C.P."/>
        </authorList>
    </citation>
    <scope>NUCLEOTIDE SEQUENCE [LARGE SCALE GENOMIC DNA]</scope>
    <source>
        <strain>C57BL/6J</strain>
    </source>
</reference>
<organism>
    <name type="scientific">Mus musculus</name>
    <name type="common">Mouse</name>
    <dbReference type="NCBI Taxonomy" id="10090"/>
    <lineage>
        <taxon>Eukaryota</taxon>
        <taxon>Metazoa</taxon>
        <taxon>Chordata</taxon>
        <taxon>Craniata</taxon>
        <taxon>Vertebrata</taxon>
        <taxon>Euteleostomi</taxon>
        <taxon>Mammalia</taxon>
        <taxon>Eutheria</taxon>
        <taxon>Euarchontoglires</taxon>
        <taxon>Glires</taxon>
        <taxon>Rodentia</taxon>
        <taxon>Myomorpha</taxon>
        <taxon>Muroidea</taxon>
        <taxon>Muridae</taxon>
        <taxon>Murinae</taxon>
        <taxon>Mus</taxon>
        <taxon>Mus</taxon>
    </lineage>
</organism>
<name>RNPL1_MOUSE</name>
<gene>
    <name evidence="6" type="primary">Rnpepl1</name>
</gene>
<accession>G5E872</accession>
<keyword id="KW-0031">Aminopeptidase</keyword>
<keyword id="KW-0378">Hydrolase</keyword>
<keyword id="KW-0479">Metal-binding</keyword>
<keyword id="KW-0482">Metalloprotease</keyword>
<keyword id="KW-0645">Protease</keyword>
<keyword id="KW-1185">Reference proteome</keyword>
<keyword id="KW-0862">Zinc</keyword>